<proteinExistence type="inferred from homology"/>
<dbReference type="EMBL" id="LT708304">
    <property type="protein sequence ID" value="SIU02438.1"/>
    <property type="status" value="ALT_INIT"/>
    <property type="molecule type" value="Genomic_DNA"/>
</dbReference>
<dbReference type="RefSeq" id="NP_857446.1">
    <property type="nucleotide sequence ID" value="NC_002945.3"/>
</dbReference>
<dbReference type="SMR" id="P65092"/>
<dbReference type="KEGG" id="mbo:BQ2027_MB3809"/>
<dbReference type="PATRIC" id="fig|233413.5.peg.4166"/>
<dbReference type="Proteomes" id="UP000001419">
    <property type="component" value="Chromosome"/>
</dbReference>
<dbReference type="GO" id="GO:0000502">
    <property type="term" value="C:proteasome complex"/>
    <property type="evidence" value="ECO:0007669"/>
    <property type="project" value="UniProtKB-KW"/>
</dbReference>
<dbReference type="GO" id="GO:0061136">
    <property type="term" value="P:regulation of proteasomal protein catabolic process"/>
    <property type="evidence" value="ECO:0007669"/>
    <property type="project" value="InterPro"/>
</dbReference>
<dbReference type="InterPro" id="IPR019695">
    <property type="entry name" value="Proteasome_act"/>
</dbReference>
<dbReference type="Pfam" id="PF10759">
    <property type="entry name" value="BPA"/>
    <property type="match status" value="1"/>
</dbReference>
<feature type="chain" id="PRO_0000104146" description="Bacterial proteasome activator">
    <location>
        <begin position="1"/>
        <end position="174"/>
    </location>
</feature>
<feature type="region of interest" description="Disordered" evidence="2">
    <location>
        <begin position="153"/>
        <end position="174"/>
    </location>
</feature>
<feature type="short sequence motif" description="HbYX motif" evidence="1">
    <location>
        <begin position="172"/>
        <end position="174"/>
    </location>
</feature>
<feature type="compositionally biased region" description="Gly residues" evidence="2">
    <location>
        <begin position="161"/>
        <end position="174"/>
    </location>
</feature>
<name>BPA_MYCBO</name>
<organism>
    <name type="scientific">Mycobacterium bovis (strain ATCC BAA-935 / AF2122/97)</name>
    <dbReference type="NCBI Taxonomy" id="233413"/>
    <lineage>
        <taxon>Bacteria</taxon>
        <taxon>Bacillati</taxon>
        <taxon>Actinomycetota</taxon>
        <taxon>Actinomycetes</taxon>
        <taxon>Mycobacteriales</taxon>
        <taxon>Mycobacteriaceae</taxon>
        <taxon>Mycobacterium</taxon>
        <taxon>Mycobacterium tuberculosis complex</taxon>
    </lineage>
</organism>
<sequence length="174" mass="18944">MVIGLSTGSDDDDVEVIGGVDPRLIAVQENDSDESSLTDLVEQPAKVMRIGTMIKQLLEEVRAAPLDEASRNRLRDIHATSIRELEDGLAPELREELDRLTLPFNEDAVPSDAELRIAQAQLVGWLEGLFHGIQTALFAQQMAARAQLQQMRQGALPPGVGKSGQHGHGTGQYL</sequence>
<evidence type="ECO:0000250" key="1">
    <source>
        <dbReference type="UniProtKB" id="P9WKX3"/>
    </source>
</evidence>
<evidence type="ECO:0000256" key="2">
    <source>
        <dbReference type="SAM" id="MobiDB-lite"/>
    </source>
</evidence>
<evidence type="ECO:0000305" key="3"/>
<reference key="1">
    <citation type="journal article" date="2003" name="Proc. Natl. Acad. Sci. U.S.A.">
        <title>The complete genome sequence of Mycobacterium bovis.</title>
        <authorList>
            <person name="Garnier T."/>
            <person name="Eiglmeier K."/>
            <person name="Camus J.-C."/>
            <person name="Medina N."/>
            <person name="Mansoor H."/>
            <person name="Pryor M."/>
            <person name="Duthoy S."/>
            <person name="Grondin S."/>
            <person name="Lacroix C."/>
            <person name="Monsempe C."/>
            <person name="Simon S."/>
            <person name="Harris B."/>
            <person name="Atkin R."/>
            <person name="Doggett J."/>
            <person name="Mayes R."/>
            <person name="Keating L."/>
            <person name="Wheeler P.R."/>
            <person name="Parkhill J."/>
            <person name="Barrell B.G."/>
            <person name="Cole S.T."/>
            <person name="Gordon S.V."/>
            <person name="Hewinson R.G."/>
        </authorList>
    </citation>
    <scope>NUCLEOTIDE SEQUENCE [LARGE SCALE GENOMIC DNA]</scope>
    <source>
        <strain>ATCC BAA-935 / AF2122/97</strain>
    </source>
</reference>
<reference key="2">
    <citation type="journal article" date="2017" name="Genome Announc.">
        <title>Updated reference genome sequence and annotation of Mycobacterium bovis AF2122/97.</title>
        <authorList>
            <person name="Malone K.M."/>
            <person name="Farrell D."/>
            <person name="Stuber T.P."/>
            <person name="Schubert O.T."/>
            <person name="Aebersold R."/>
            <person name="Robbe-Austerman S."/>
            <person name="Gordon S.V."/>
        </authorList>
    </citation>
    <scope>NUCLEOTIDE SEQUENCE [LARGE SCALE GENOMIC DNA]</scope>
    <scope>GENOME REANNOTATION</scope>
    <source>
        <strain>ATCC BAA-935 / AF2122/97</strain>
    </source>
</reference>
<gene>
    <name type="primary">bpa</name>
    <name type="ordered locus">BQ2027_MB3809</name>
</gene>
<keyword id="KW-0647">Proteasome</keyword>
<keyword id="KW-1185">Reference proteome</keyword>
<protein>
    <recommendedName>
        <fullName evidence="1">Bacterial proteasome activator</fullName>
    </recommendedName>
</protein>
<accession>P65092</accession>
<accession>A0A1R3Y592</accession>
<accession>P72046</accession>
<accession>X2BQ23</accession>
<comment type="function">
    <text evidence="1">Interacts with the core proteasome alpha-subunit (PrcA) through its C-terminal hydrophobic-tyrosine-X motif (HbYX motif). Interaction of Bpa with the proteasome stimulates proteasomal peptidase and casein degradation activity, which suggests Bpa could play a role in the removal of non-native or damaged proteins by influencing the conformation of the proteasome complex upon interaction.</text>
</comment>
<comment type="subunit">
    <text evidence="1">Forms a homooligomeric, either hexameric or heptameric, ring-like structure which stacks co-axially with the proteasomal alpha-rings.</text>
</comment>
<comment type="similarity">
    <text evidence="3">Belongs to the Bpa family.</text>
</comment>
<comment type="sequence caution" evidence="3">
    <conflict type="erroneous initiation">
        <sequence resource="EMBL-CDS" id="SIU02438"/>
    </conflict>
    <text>Extended N-terminus.</text>
</comment>